<protein>
    <recommendedName>
        <fullName>B3 domain-containing transcription factor LEC2</fullName>
    </recommendedName>
    <alternativeName>
        <fullName>Protein LEAFY COTYLEDON 2</fullName>
    </alternativeName>
</protein>
<dbReference type="EMBL" id="AF400123">
    <property type="protein sequence ID" value="AAL12004.1"/>
    <property type="molecule type" value="mRNA"/>
</dbReference>
<dbReference type="EMBL" id="AF400124">
    <property type="protein sequence ID" value="AAL12005.1"/>
    <property type="molecule type" value="Genomic_DNA"/>
</dbReference>
<dbReference type="EMBL" id="AC021044">
    <property type="protein sequence ID" value="AAF98425.1"/>
    <property type="status" value="ALT_SEQ"/>
    <property type="molecule type" value="Genomic_DNA"/>
</dbReference>
<dbReference type="EMBL" id="CP002684">
    <property type="protein sequence ID" value="AEE30945.1"/>
    <property type="molecule type" value="Genomic_DNA"/>
</dbReference>
<dbReference type="EMBL" id="AJ630496">
    <property type="protein sequence ID" value="CAG25869.1"/>
    <property type="molecule type" value="mRNA"/>
</dbReference>
<dbReference type="EMBL" id="AY568668">
    <property type="protein sequence ID" value="AAS79558.1"/>
    <property type="molecule type" value="mRNA"/>
</dbReference>
<dbReference type="EMBL" id="DQ446296">
    <property type="protein sequence ID" value="ABE65660.1"/>
    <property type="molecule type" value="mRNA"/>
</dbReference>
<dbReference type="EMBL" id="DQ652865">
    <property type="protein sequence ID" value="ABK28418.1"/>
    <property type="status" value="ALT_SEQ"/>
    <property type="molecule type" value="mRNA"/>
</dbReference>
<dbReference type="PIR" id="C86409">
    <property type="entry name" value="C86409"/>
</dbReference>
<dbReference type="RefSeq" id="NP_564304.1">
    <property type="nucleotide sequence ID" value="NM_102595.2"/>
</dbReference>
<dbReference type="PDB" id="6J9C">
    <property type="method" value="X-ray"/>
    <property type="resolution" value="3.10 A"/>
    <property type="chains" value="A/D=160-273"/>
</dbReference>
<dbReference type="PDBsum" id="6J9C"/>
<dbReference type="SMR" id="Q1PFR7"/>
<dbReference type="BioGRID" id="24959">
    <property type="interactions" value="1"/>
</dbReference>
<dbReference type="FunCoup" id="Q1PFR7">
    <property type="interactions" value="81"/>
</dbReference>
<dbReference type="STRING" id="3702.Q1PFR7"/>
<dbReference type="PaxDb" id="3702-AT1G28300.1"/>
<dbReference type="EnsemblPlants" id="AT1G28300.1">
    <property type="protein sequence ID" value="AT1G28300.1"/>
    <property type="gene ID" value="AT1G28300"/>
</dbReference>
<dbReference type="GeneID" id="839724"/>
<dbReference type="Gramene" id="AT1G28300.1">
    <property type="protein sequence ID" value="AT1G28300.1"/>
    <property type="gene ID" value="AT1G28300"/>
</dbReference>
<dbReference type="KEGG" id="ath:AT1G28300"/>
<dbReference type="Araport" id="AT1G28300"/>
<dbReference type="TAIR" id="AT1G28300">
    <property type="gene designation" value="LEC2"/>
</dbReference>
<dbReference type="eggNOG" id="ENOG502S2IE">
    <property type="taxonomic scope" value="Eukaryota"/>
</dbReference>
<dbReference type="HOGENOM" id="CLU_768029_0_0_1"/>
<dbReference type="InParanoid" id="Q1PFR7"/>
<dbReference type="OMA" id="LNDHYPI"/>
<dbReference type="PhylomeDB" id="Q1PFR7"/>
<dbReference type="PRO" id="PR:Q1PFR7"/>
<dbReference type="Proteomes" id="UP000006548">
    <property type="component" value="Chromosome 1"/>
</dbReference>
<dbReference type="ExpressionAtlas" id="Q1PFR7">
    <property type="expression patterns" value="baseline and differential"/>
</dbReference>
<dbReference type="GO" id="GO:0005634">
    <property type="term" value="C:nucleus"/>
    <property type="evidence" value="ECO:0007669"/>
    <property type="project" value="UniProtKB-SubCell"/>
</dbReference>
<dbReference type="GO" id="GO:0003677">
    <property type="term" value="F:DNA binding"/>
    <property type="evidence" value="ECO:0000314"/>
    <property type="project" value="TAIR"/>
</dbReference>
<dbReference type="GO" id="GO:0003700">
    <property type="term" value="F:DNA-binding transcription factor activity"/>
    <property type="evidence" value="ECO:0000314"/>
    <property type="project" value="TAIR"/>
</dbReference>
<dbReference type="GO" id="GO:0009793">
    <property type="term" value="P:embryo development ending in seed dormancy"/>
    <property type="evidence" value="ECO:0000315"/>
    <property type="project" value="TAIR"/>
</dbReference>
<dbReference type="GO" id="GO:0010601">
    <property type="term" value="P:positive regulation of auxin biosynthetic process"/>
    <property type="evidence" value="ECO:0000315"/>
    <property type="project" value="TAIR"/>
</dbReference>
<dbReference type="GO" id="GO:0045893">
    <property type="term" value="P:positive regulation of DNA-templated transcription"/>
    <property type="evidence" value="ECO:0000314"/>
    <property type="project" value="TAIR"/>
</dbReference>
<dbReference type="GO" id="GO:0010431">
    <property type="term" value="P:seed maturation"/>
    <property type="evidence" value="ECO:0000315"/>
    <property type="project" value="TAIR"/>
</dbReference>
<dbReference type="GO" id="GO:0010344">
    <property type="term" value="P:seed oilbody biogenesis"/>
    <property type="evidence" value="ECO:0000315"/>
    <property type="project" value="TAIR"/>
</dbReference>
<dbReference type="GO" id="GO:0010262">
    <property type="term" value="P:somatic embryogenesis"/>
    <property type="evidence" value="ECO:0000315"/>
    <property type="project" value="TAIR"/>
</dbReference>
<dbReference type="CDD" id="cd10017">
    <property type="entry name" value="B3_DNA"/>
    <property type="match status" value="1"/>
</dbReference>
<dbReference type="Gene3D" id="2.40.330.10">
    <property type="entry name" value="DNA-binding pseudobarrel domain"/>
    <property type="match status" value="1"/>
</dbReference>
<dbReference type="InterPro" id="IPR003340">
    <property type="entry name" value="B3_DNA-bd"/>
</dbReference>
<dbReference type="InterPro" id="IPR015300">
    <property type="entry name" value="DNA-bd_pseudobarrel_sf"/>
</dbReference>
<dbReference type="InterPro" id="IPR044800">
    <property type="entry name" value="LEC2-like"/>
</dbReference>
<dbReference type="PANTHER" id="PTHR31140">
    <property type="entry name" value="B3 DOMAIN-CONTAINING TRANSCRIPTION FACTOR ABI3"/>
    <property type="match status" value="1"/>
</dbReference>
<dbReference type="PANTHER" id="PTHR31140:SF74">
    <property type="entry name" value="B3 DOMAIN-CONTAINING TRANSCRIPTION FACTOR LEC2"/>
    <property type="match status" value="1"/>
</dbReference>
<dbReference type="Pfam" id="PF02362">
    <property type="entry name" value="B3"/>
    <property type="match status" value="1"/>
</dbReference>
<dbReference type="SMART" id="SM01019">
    <property type="entry name" value="B3"/>
    <property type="match status" value="1"/>
</dbReference>
<dbReference type="SUPFAM" id="SSF101936">
    <property type="entry name" value="DNA-binding pseudobarrel domain"/>
    <property type="match status" value="1"/>
</dbReference>
<dbReference type="PROSITE" id="PS50863">
    <property type="entry name" value="B3"/>
    <property type="match status" value="1"/>
</dbReference>
<gene>
    <name type="primary">LEC2</name>
    <name type="ordered locus">At1g28300</name>
    <name type="ORF">F3H9.5</name>
</gene>
<organism>
    <name type="scientific">Arabidopsis thaliana</name>
    <name type="common">Mouse-ear cress</name>
    <dbReference type="NCBI Taxonomy" id="3702"/>
    <lineage>
        <taxon>Eukaryota</taxon>
        <taxon>Viridiplantae</taxon>
        <taxon>Streptophyta</taxon>
        <taxon>Embryophyta</taxon>
        <taxon>Tracheophyta</taxon>
        <taxon>Spermatophyta</taxon>
        <taxon>Magnoliopsida</taxon>
        <taxon>eudicotyledons</taxon>
        <taxon>Gunneridae</taxon>
        <taxon>Pentapetalae</taxon>
        <taxon>rosids</taxon>
        <taxon>malvids</taxon>
        <taxon>Brassicales</taxon>
        <taxon>Brassicaceae</taxon>
        <taxon>Camelineae</taxon>
        <taxon>Arabidopsis</taxon>
    </lineage>
</organism>
<name>LEC2_ARATH</name>
<comment type="function">
    <text evidence="3 5 6">Transcription regulator that plays a central role in embryo development. Required for the maintenance of suspensor morphology, specification of cotyledon identity, progression through the maturation phase and suppression of premature germination. Ectopic expression is sufficient to promote somatic embryogenesis.</text>
</comment>
<comment type="subcellular location">
    <subcellularLocation>
        <location evidence="7">Nucleus</location>
    </subcellularLocation>
</comment>
<comment type="developmental stage">
    <text evidence="3">Expressed during embryo development.</text>
</comment>
<comment type="disruption phenotype">
    <text evidence="4">Pigmented seeds. Distorted seedlings with elongated hypocotyl and curled cotyledons. Presence of trichomes and accumulation of anthocyanins on cotyledons. Unusual pattern of storage product accumulation in seedlings.</text>
</comment>
<comment type="sequence caution" evidence="7">
    <conflict type="erroneous gene model prediction">
        <sequence resource="EMBL-CDS" id="AAF98425"/>
    </conflict>
</comment>
<comment type="sequence caution" evidence="7">
    <conflict type="erroneous termination">
        <sequence resource="EMBL-CDS" id="ABK28418"/>
    </conflict>
    <text>Extended C-terminus.</text>
</comment>
<accession>Q1PFR7</accession>
<accession>A0ME96</accession>
<accession>Q93VR5</accession>
<accession>Q9FZA3</accession>
<evidence type="ECO:0000255" key="1">
    <source>
        <dbReference type="PROSITE-ProRule" id="PRU00326"/>
    </source>
</evidence>
<evidence type="ECO:0000256" key="2">
    <source>
        <dbReference type="SAM" id="MobiDB-lite"/>
    </source>
</evidence>
<evidence type="ECO:0000269" key="3">
    <source>
    </source>
</evidence>
<evidence type="ECO:0000269" key="4">
    <source>
    </source>
</evidence>
<evidence type="ECO:0000269" key="5">
    <source>
    </source>
</evidence>
<evidence type="ECO:0000269" key="6">
    <source>
    </source>
</evidence>
<evidence type="ECO:0000305" key="7"/>
<evidence type="ECO:0007829" key="8">
    <source>
        <dbReference type="PDB" id="6J9C"/>
    </source>
</evidence>
<keyword id="KW-0002">3D-structure</keyword>
<keyword id="KW-0238">DNA-binding</keyword>
<keyword id="KW-0539">Nucleus</keyword>
<keyword id="KW-1185">Reference proteome</keyword>
<keyword id="KW-0804">Transcription</keyword>
<keyword id="KW-0805">Transcription regulation</keyword>
<reference key="1">
    <citation type="journal article" date="2001" name="Proc. Natl. Acad. Sci. U.S.A.">
        <title>LEAFY COTYLEDON2 encodes a B3 domain transcription factor that induces embryo development.</title>
        <authorList>
            <person name="Stone S.L."/>
            <person name="Kwong L.W."/>
            <person name="Yee K.M."/>
            <person name="Pelletier J."/>
            <person name="Lepiniec L."/>
            <person name="Fischer R.L."/>
            <person name="Goldberg R.B."/>
            <person name="Harada J.J."/>
        </authorList>
    </citation>
    <scope>NUCLEOTIDE SEQUENCE [GENOMIC DNA / MRNA]</scope>
    <scope>FUNCTION</scope>
    <scope>DEVELOPMENTAL STAGE</scope>
</reference>
<reference key="2">
    <citation type="journal article" date="2000" name="Nature">
        <title>Sequence and analysis of chromosome 1 of the plant Arabidopsis thaliana.</title>
        <authorList>
            <person name="Theologis A."/>
            <person name="Ecker J.R."/>
            <person name="Palm C.J."/>
            <person name="Federspiel N.A."/>
            <person name="Kaul S."/>
            <person name="White O."/>
            <person name="Alonso J."/>
            <person name="Altafi H."/>
            <person name="Araujo R."/>
            <person name="Bowman C.L."/>
            <person name="Brooks S.Y."/>
            <person name="Buehler E."/>
            <person name="Chan A."/>
            <person name="Chao Q."/>
            <person name="Chen H."/>
            <person name="Cheuk R.F."/>
            <person name="Chin C.W."/>
            <person name="Chung M.K."/>
            <person name="Conn L."/>
            <person name="Conway A.B."/>
            <person name="Conway A.R."/>
            <person name="Creasy T.H."/>
            <person name="Dewar K."/>
            <person name="Dunn P."/>
            <person name="Etgu P."/>
            <person name="Feldblyum T.V."/>
            <person name="Feng J.-D."/>
            <person name="Fong B."/>
            <person name="Fujii C.Y."/>
            <person name="Gill J.E."/>
            <person name="Goldsmith A.D."/>
            <person name="Haas B."/>
            <person name="Hansen N.F."/>
            <person name="Hughes B."/>
            <person name="Huizar L."/>
            <person name="Hunter J.L."/>
            <person name="Jenkins J."/>
            <person name="Johnson-Hopson C."/>
            <person name="Khan S."/>
            <person name="Khaykin E."/>
            <person name="Kim C.J."/>
            <person name="Koo H.L."/>
            <person name="Kremenetskaia I."/>
            <person name="Kurtz D.B."/>
            <person name="Kwan A."/>
            <person name="Lam B."/>
            <person name="Langin-Hooper S."/>
            <person name="Lee A."/>
            <person name="Lee J.M."/>
            <person name="Lenz C.A."/>
            <person name="Li J.H."/>
            <person name="Li Y.-P."/>
            <person name="Lin X."/>
            <person name="Liu S.X."/>
            <person name="Liu Z.A."/>
            <person name="Luros J.S."/>
            <person name="Maiti R."/>
            <person name="Marziali A."/>
            <person name="Militscher J."/>
            <person name="Miranda M."/>
            <person name="Nguyen M."/>
            <person name="Nierman W.C."/>
            <person name="Osborne B.I."/>
            <person name="Pai G."/>
            <person name="Peterson J."/>
            <person name="Pham P.K."/>
            <person name="Rizzo M."/>
            <person name="Rooney T."/>
            <person name="Rowley D."/>
            <person name="Sakano H."/>
            <person name="Salzberg S.L."/>
            <person name="Schwartz J.R."/>
            <person name="Shinn P."/>
            <person name="Southwick A.M."/>
            <person name="Sun H."/>
            <person name="Tallon L.J."/>
            <person name="Tambunga G."/>
            <person name="Toriumi M.J."/>
            <person name="Town C.D."/>
            <person name="Utterback T."/>
            <person name="Van Aken S."/>
            <person name="Vaysberg M."/>
            <person name="Vysotskaia V.S."/>
            <person name="Walker M."/>
            <person name="Wu D."/>
            <person name="Yu G."/>
            <person name="Fraser C.M."/>
            <person name="Venter J.C."/>
            <person name="Davis R.W."/>
        </authorList>
    </citation>
    <scope>NUCLEOTIDE SEQUENCE [LARGE SCALE GENOMIC DNA]</scope>
    <source>
        <strain>cv. Columbia</strain>
    </source>
</reference>
<reference key="3">
    <citation type="journal article" date="2017" name="Plant J.">
        <title>Araport11: a complete reannotation of the Arabidopsis thaliana reference genome.</title>
        <authorList>
            <person name="Cheng C.Y."/>
            <person name="Krishnakumar V."/>
            <person name="Chan A.P."/>
            <person name="Thibaud-Nissen F."/>
            <person name="Schobel S."/>
            <person name="Town C.D."/>
        </authorList>
    </citation>
    <scope>GENOME REANNOTATION</scope>
    <source>
        <strain>cv. Columbia</strain>
    </source>
</reference>
<reference key="4">
    <citation type="journal article" date="2004" name="Plant Physiol.">
        <title>Genome-wide ORFeome cloning and analysis of Arabidopsis transcription factor genes.</title>
        <authorList>
            <person name="Gong W."/>
            <person name="Shen Y.-P."/>
            <person name="Ma L.-G."/>
            <person name="Pan Y."/>
            <person name="Du Y.-L."/>
            <person name="Wang D.-H."/>
            <person name="Yang J.-Y."/>
            <person name="Hu L.-D."/>
            <person name="Liu X.-F."/>
            <person name="Dong C.-X."/>
            <person name="Ma L."/>
            <person name="Chen Y.-H."/>
            <person name="Yang X.-Y."/>
            <person name="Gao Y."/>
            <person name="Zhu D."/>
            <person name="Tan X."/>
            <person name="Mu J.-Y."/>
            <person name="Zhang D.-B."/>
            <person name="Liu Y.-L."/>
            <person name="Dinesh-Kumar S.P."/>
            <person name="Li Y."/>
            <person name="Wang X.-P."/>
            <person name="Gu H.-Y."/>
            <person name="Qu L.-J."/>
            <person name="Bai S.-N."/>
            <person name="Lu Y.-T."/>
            <person name="Li J.-Y."/>
            <person name="Zhao J.-D."/>
            <person name="Zuo J."/>
            <person name="Huang H."/>
            <person name="Deng X.-W."/>
            <person name="Zhu Y.-X."/>
        </authorList>
    </citation>
    <scope>NUCLEOTIDE SEQUENCE [LARGE SCALE MRNA]</scope>
    <source>
        <strain>cv. Columbia</strain>
    </source>
</reference>
<reference key="5">
    <citation type="journal article" date="2006" name="Plant Biotechnol. J.">
        <title>Simultaneous high-throughput recombinational cloning of open reading frames in closed and open configurations.</title>
        <authorList>
            <person name="Underwood B.A."/>
            <person name="Vanderhaeghen R."/>
            <person name="Whitford R."/>
            <person name="Town C.D."/>
            <person name="Hilson P."/>
        </authorList>
    </citation>
    <scope>NUCLEOTIDE SEQUENCE [LARGE SCALE MRNA]</scope>
    <source>
        <strain>cv. Columbia</strain>
    </source>
</reference>
<reference key="6">
    <citation type="journal article" date="1994" name="Plant Cell">
        <title>Leafy cotyledon mutants of Arabidopsis.</title>
        <authorList>
            <person name="Meinke D.W."/>
            <person name="Franzmann L.H."/>
            <person name="Nickle T.C."/>
            <person name="Yeung E.C."/>
        </authorList>
    </citation>
    <scope>DISRUPTION PHENOTYPE</scope>
</reference>
<reference key="7">
    <citation type="journal article" date="2006" name="Proc. Natl. Acad. Sci. U.S.A.">
        <title>Genes directly regulated by LEAFY COTYLEDON2 provide insight into the control of embryo maturation and somatic embryogenesis.</title>
        <authorList>
            <person name="Braybrook S.A."/>
            <person name="Stone S.L."/>
            <person name="Park S."/>
            <person name="Bui A.Q."/>
            <person name="Le B.H."/>
            <person name="Fischer R.L."/>
            <person name="Goldberg R.B."/>
            <person name="Harada J.J."/>
        </authorList>
    </citation>
    <scope>FUNCTION</scope>
</reference>
<reference key="8">
    <citation type="journal article" date="2008" name="Proc. Natl. Acad. Sci. U.S.A.">
        <title>Arabidopsis LEAFY COTYLEDON2 induces maturation traits and auxin activity: implications for somatic embryogenesis.</title>
        <authorList>
            <person name="Stone S.L."/>
            <person name="Braybrook S.A."/>
            <person name="Paula S.L."/>
            <person name="Kwong L.W."/>
            <person name="Meuser J."/>
            <person name="Pelletier J."/>
            <person name="Hsieh T.-F."/>
            <person name="Fischer R.L."/>
            <person name="Goldberg R.B."/>
            <person name="Harada J.J."/>
        </authorList>
    </citation>
    <scope>FUNCTION</scope>
</reference>
<reference key="9">
    <citation type="journal article" date="2008" name="Trends Plant Sci.">
        <title>The plant B3 superfamily.</title>
        <authorList>
            <person name="Swaminathan K."/>
            <person name="Peterson K."/>
            <person name="Jack T."/>
        </authorList>
    </citation>
    <scope>GENE FAMILY</scope>
</reference>
<feature type="chain" id="PRO_0000375090" description="B3 domain-containing transcription factor LEC2">
    <location>
        <begin position="1"/>
        <end position="363"/>
    </location>
</feature>
<feature type="DNA-binding region" description="TF-B3" evidence="1">
    <location>
        <begin position="171"/>
        <end position="272"/>
    </location>
</feature>
<feature type="region of interest" description="Disordered" evidence="2">
    <location>
        <begin position="1"/>
        <end position="27"/>
    </location>
</feature>
<feature type="region of interest" description="Disordered" evidence="2">
    <location>
        <begin position="331"/>
        <end position="351"/>
    </location>
</feature>
<feature type="compositionally biased region" description="Polar residues" evidence="2">
    <location>
        <begin position="8"/>
        <end position="27"/>
    </location>
</feature>
<feature type="sequence conflict" description="In Ref. 1; AAL12004/AAL12005 and 4; AAS79558/CAG25869." evidence="7" ref="1 4">
    <original>SMP</original>
    <variation>MT</variation>
    <location>
        <begin position="339"/>
        <end position="341"/>
    </location>
</feature>
<feature type="strand" evidence="8">
    <location>
        <begin position="167"/>
        <end position="174"/>
    </location>
</feature>
<feature type="turn" evidence="8">
    <location>
        <begin position="177"/>
        <end position="180"/>
    </location>
</feature>
<feature type="strand" evidence="8">
    <location>
        <begin position="185"/>
        <end position="188"/>
    </location>
</feature>
<feature type="helix" evidence="8">
    <location>
        <begin position="190"/>
        <end position="196"/>
    </location>
</feature>
<feature type="strand" evidence="8">
    <location>
        <begin position="206"/>
        <end position="211"/>
    </location>
</feature>
<feature type="strand" evidence="8">
    <location>
        <begin position="218"/>
        <end position="228"/>
    </location>
</feature>
<feature type="strand" evidence="8">
    <location>
        <begin position="231"/>
        <end position="237"/>
    </location>
</feature>
<feature type="helix" evidence="8">
    <location>
        <begin position="240"/>
        <end position="246"/>
    </location>
</feature>
<feature type="strand" evidence="8">
    <location>
        <begin position="253"/>
        <end position="262"/>
    </location>
</feature>
<feature type="strand" evidence="8">
    <location>
        <begin position="269"/>
        <end position="271"/>
    </location>
</feature>
<proteinExistence type="evidence at protein level"/>
<sequence length="363" mass="41708">MDNFLPFPSSNANSVQELSMDPNNNRSHFTTVPTYDHHQAQPHHFLPPFSYPVEQMAAVMNPQPVYLSECYPQIPVTQTGSEFGSLVGNPCLWQERGGFLDPRMTKMARINRKNAMMRSRNNSSPNSSPSELVDSKRQLMMLNLKNNVQISDKKDSYQQSTFDNKKLRVLCEKELKNSDVGSLGRIVLPKRDAEANLPKLSDKEGIVVQMRDVFSMQSWSFKYKFWSNNKSRMYVLENTGEFVKQNGAEIGDFLTIYEDESKNLYFAMNGNSGKQNEGRENESRERNHYEEAMLDYIPRDEEEASIAMLIGNLNDHYPIPNDLMDLTTDLQHHQATSSSMPPEDHAYVGSSDDQVSFNDFEWW</sequence>